<accession>A7MJI0</accession>
<protein>
    <recommendedName>
        <fullName evidence="1">Flagellar protein FliT</fullName>
    </recommendedName>
</protein>
<feature type="chain" id="PRO_0000353873" description="Flagellar protein FliT">
    <location>
        <begin position="1"/>
        <end position="120"/>
    </location>
</feature>
<feature type="region of interest" description="Required for homodimerization" evidence="1">
    <location>
        <begin position="1"/>
        <end position="50"/>
    </location>
</feature>
<feature type="region of interest" description="FliD binding" evidence="1">
    <location>
        <begin position="59"/>
        <end position="97"/>
    </location>
</feature>
<proteinExistence type="inferred from homology"/>
<organism>
    <name type="scientific">Cronobacter sakazakii (strain ATCC BAA-894)</name>
    <name type="common">Enterobacter sakazakii</name>
    <dbReference type="NCBI Taxonomy" id="290339"/>
    <lineage>
        <taxon>Bacteria</taxon>
        <taxon>Pseudomonadati</taxon>
        <taxon>Pseudomonadota</taxon>
        <taxon>Gammaproteobacteria</taxon>
        <taxon>Enterobacterales</taxon>
        <taxon>Enterobacteriaceae</taxon>
        <taxon>Cronobacter</taxon>
    </lineage>
</organism>
<gene>
    <name evidence="1" type="primary">fliT</name>
    <name type="ordered locus">ESA_01285</name>
</gene>
<dbReference type="EMBL" id="CP000783">
    <property type="protein sequence ID" value="ABU76547.1"/>
    <property type="molecule type" value="Genomic_DNA"/>
</dbReference>
<dbReference type="RefSeq" id="WP_004386798.1">
    <property type="nucleotide sequence ID" value="NC_009778.1"/>
</dbReference>
<dbReference type="SMR" id="A7MJI0"/>
<dbReference type="GeneID" id="56730151"/>
<dbReference type="KEGG" id="esa:ESA_01285"/>
<dbReference type="HOGENOM" id="CLU_155793_1_0_6"/>
<dbReference type="Proteomes" id="UP000000260">
    <property type="component" value="Chromosome"/>
</dbReference>
<dbReference type="GO" id="GO:0005829">
    <property type="term" value="C:cytosol"/>
    <property type="evidence" value="ECO:0007669"/>
    <property type="project" value="UniProtKB-SubCell"/>
</dbReference>
<dbReference type="GO" id="GO:0044781">
    <property type="term" value="P:bacterial-type flagellum organization"/>
    <property type="evidence" value="ECO:0007669"/>
    <property type="project" value="UniProtKB-KW"/>
</dbReference>
<dbReference type="GO" id="GO:1902209">
    <property type="term" value="P:negative regulation of bacterial-type flagellum assembly"/>
    <property type="evidence" value="ECO:0007669"/>
    <property type="project" value="UniProtKB-UniRule"/>
</dbReference>
<dbReference type="GO" id="GO:0006457">
    <property type="term" value="P:protein folding"/>
    <property type="evidence" value="ECO:0007669"/>
    <property type="project" value="UniProtKB-UniRule"/>
</dbReference>
<dbReference type="Gene3D" id="1.20.58.380">
    <property type="entry name" value="Flagellar protein flit"/>
    <property type="match status" value="1"/>
</dbReference>
<dbReference type="HAMAP" id="MF_01180">
    <property type="entry name" value="FliT"/>
    <property type="match status" value="1"/>
</dbReference>
<dbReference type="InterPro" id="IPR008622">
    <property type="entry name" value="FliT"/>
</dbReference>
<dbReference type="NCBIfam" id="NF007836">
    <property type="entry name" value="PRK10548.1"/>
    <property type="match status" value="1"/>
</dbReference>
<dbReference type="Pfam" id="PF05400">
    <property type="entry name" value="FliT"/>
    <property type="match status" value="1"/>
</dbReference>
<reference key="1">
    <citation type="journal article" date="2010" name="PLoS ONE">
        <title>Genome sequence of Cronobacter sakazakii BAA-894 and comparative genomic hybridization analysis with other Cronobacter species.</title>
        <authorList>
            <person name="Kucerova E."/>
            <person name="Clifton S.W."/>
            <person name="Xia X.Q."/>
            <person name="Long F."/>
            <person name="Porwollik S."/>
            <person name="Fulton L."/>
            <person name="Fronick C."/>
            <person name="Minx P."/>
            <person name="Kyung K."/>
            <person name="Warren W."/>
            <person name="Fulton R."/>
            <person name="Feng D."/>
            <person name="Wollam A."/>
            <person name="Shah N."/>
            <person name="Bhonagiri V."/>
            <person name="Nash W.E."/>
            <person name="Hallsworth-Pepin K."/>
            <person name="Wilson R.K."/>
            <person name="McClelland M."/>
            <person name="Forsythe S.J."/>
        </authorList>
    </citation>
    <scope>NUCLEOTIDE SEQUENCE [LARGE SCALE GENOMIC DNA]</scope>
    <source>
        <strain>ATCC BAA-894</strain>
    </source>
</reference>
<comment type="function">
    <text evidence="1">Dual-function protein that regulates the transcription of class 2 flagellar operons and that also acts as an export chaperone for the filament-capping protein FliD. As a transcriptional regulator, acts as an anti-FlhDC factor; it directly binds FlhC, thus inhibiting the binding of the FlhC/FlhD complex to class 2 promoters, resulting in decreased expression of class 2 flagellar operons. As a chaperone, effects FliD transition to the membrane by preventing its premature polymerization, and by directing it to the export apparatus.</text>
</comment>
<comment type="subunit">
    <text evidence="1">Homodimer. Interacts with FliD and FlhC.</text>
</comment>
<comment type="subcellular location">
    <subcellularLocation>
        <location evidence="1">Cytoplasm</location>
        <location evidence="1">Cytosol</location>
    </subcellularLocation>
</comment>
<comment type="similarity">
    <text evidence="1">Belongs to the FliT family.</text>
</comment>
<evidence type="ECO:0000255" key="1">
    <source>
        <dbReference type="HAMAP-Rule" id="MF_01180"/>
    </source>
</evidence>
<sequence length="120" mass="13541">MNDFISSLNNWQALYALSNTMLSLANSGQWDELIEQEVKYVTLVEAIARNPIEPDNSVFQEKARELLTKVLANEAALKIKLQARMEELRVLIEQNGNQKSLVSAYGKLSGNVLMPNDFNQ</sequence>
<name>FLIT_CROS8</name>
<keyword id="KW-1005">Bacterial flagellum biogenesis</keyword>
<keyword id="KW-0143">Chaperone</keyword>
<keyword id="KW-0963">Cytoplasm</keyword>
<keyword id="KW-1185">Reference proteome</keyword>
<keyword id="KW-0678">Repressor</keyword>
<keyword id="KW-0804">Transcription</keyword>
<keyword id="KW-0805">Transcription regulation</keyword>